<sequence length="247" mass="28747">MQTHVLFEHPLNEKMRTWLRIEFLIQQMKALLPVSDHASALHFFRNVGDLLDVFERGDTRTELLKELERQQRKLQSWAEVPGVDNERIESLRHELKARSSMLMAAPRLGQTLREDRLIALVRQRLSIPGGCCSFDLPLLHVWLCSPQEERDVQVNSWLATLQPLTYTLDMILDLIRQSAPFRKQTSLNGFYQDNGDDADLLRLQLPLQEALYPQISGHKSRFAIRFMPLDSEHGRVPERFDFELACC</sequence>
<comment type="function">
    <text evidence="1">Cell division factor that enhances FtsZ-ring assembly. Directly interacts with FtsZ and promotes bundling of FtsZ protofilaments, with a reduction in FtsZ GTPase activity.</text>
</comment>
<comment type="subunit">
    <text evidence="1">Interacts with FtsZ.</text>
</comment>
<comment type="subcellular location">
    <subcellularLocation>
        <location evidence="1">Cytoplasm</location>
    </subcellularLocation>
    <text evidence="1">Localizes to mid-cell in an FtsZ-dependent manner.</text>
</comment>
<comment type="similarity">
    <text evidence="1">Belongs to the ZapD family.</text>
</comment>
<feature type="chain" id="PRO_1000064912" description="Cell division protein ZapD">
    <location>
        <begin position="1"/>
        <end position="247"/>
    </location>
</feature>
<organism>
    <name type="scientific">Cronobacter sakazakii (strain ATCC BAA-894)</name>
    <name type="common">Enterobacter sakazakii</name>
    <dbReference type="NCBI Taxonomy" id="290339"/>
    <lineage>
        <taxon>Bacteria</taxon>
        <taxon>Pseudomonadati</taxon>
        <taxon>Pseudomonadota</taxon>
        <taxon>Gammaproteobacteria</taxon>
        <taxon>Enterobacterales</taxon>
        <taxon>Enterobacteriaceae</taxon>
        <taxon>Cronobacter</taxon>
    </lineage>
</organism>
<protein>
    <recommendedName>
        <fullName evidence="1">Cell division protein ZapD</fullName>
    </recommendedName>
    <alternativeName>
        <fullName evidence="1">Z ring-associated protein D</fullName>
    </alternativeName>
</protein>
<evidence type="ECO:0000255" key="1">
    <source>
        <dbReference type="HAMAP-Rule" id="MF_01092"/>
    </source>
</evidence>
<accession>A7MIG0</accession>
<reference key="1">
    <citation type="journal article" date="2010" name="PLoS ONE">
        <title>Genome sequence of Cronobacter sakazakii BAA-894 and comparative genomic hybridization analysis with other Cronobacter species.</title>
        <authorList>
            <person name="Kucerova E."/>
            <person name="Clifton S.W."/>
            <person name="Xia X.Q."/>
            <person name="Long F."/>
            <person name="Porwollik S."/>
            <person name="Fulton L."/>
            <person name="Fronick C."/>
            <person name="Minx P."/>
            <person name="Kyung K."/>
            <person name="Warren W."/>
            <person name="Fulton R."/>
            <person name="Feng D."/>
            <person name="Wollam A."/>
            <person name="Shah N."/>
            <person name="Bhonagiri V."/>
            <person name="Nash W.E."/>
            <person name="Hallsworth-Pepin K."/>
            <person name="Wilson R.K."/>
            <person name="McClelland M."/>
            <person name="Forsythe S.J."/>
        </authorList>
    </citation>
    <scope>NUCLEOTIDE SEQUENCE [LARGE SCALE GENOMIC DNA]</scope>
    <source>
        <strain>ATCC BAA-894</strain>
    </source>
</reference>
<dbReference type="EMBL" id="CP000783">
    <property type="protein sequence ID" value="ABU78458.1"/>
    <property type="molecule type" value="Genomic_DNA"/>
</dbReference>
<dbReference type="RefSeq" id="WP_004388387.1">
    <property type="nucleotide sequence ID" value="NC_009778.1"/>
</dbReference>
<dbReference type="SMR" id="A7MIG0"/>
<dbReference type="GeneID" id="56731923"/>
<dbReference type="KEGG" id="esa:ESA_03236"/>
<dbReference type="HOGENOM" id="CLU_076303_0_0_6"/>
<dbReference type="Proteomes" id="UP000000260">
    <property type="component" value="Chromosome"/>
</dbReference>
<dbReference type="GO" id="GO:0032153">
    <property type="term" value="C:cell division site"/>
    <property type="evidence" value="ECO:0007669"/>
    <property type="project" value="TreeGrafter"/>
</dbReference>
<dbReference type="GO" id="GO:0005737">
    <property type="term" value="C:cytoplasm"/>
    <property type="evidence" value="ECO:0007669"/>
    <property type="project" value="UniProtKB-SubCell"/>
</dbReference>
<dbReference type="GO" id="GO:0000917">
    <property type="term" value="P:division septum assembly"/>
    <property type="evidence" value="ECO:0007669"/>
    <property type="project" value="UniProtKB-KW"/>
</dbReference>
<dbReference type="GO" id="GO:0043093">
    <property type="term" value="P:FtsZ-dependent cytokinesis"/>
    <property type="evidence" value="ECO:0007669"/>
    <property type="project" value="UniProtKB-UniRule"/>
</dbReference>
<dbReference type="FunFam" id="1.10.3900.10:FF:000001">
    <property type="entry name" value="Cell division protein ZapD"/>
    <property type="match status" value="1"/>
</dbReference>
<dbReference type="FunFam" id="2.60.440.10:FF:000001">
    <property type="entry name" value="Cell division protein ZapD"/>
    <property type="match status" value="1"/>
</dbReference>
<dbReference type="Gene3D" id="1.10.3900.10">
    <property type="entry name" value="YacF-like"/>
    <property type="match status" value="1"/>
</dbReference>
<dbReference type="Gene3D" id="2.60.440.10">
    <property type="entry name" value="YacF-like domains"/>
    <property type="match status" value="1"/>
</dbReference>
<dbReference type="HAMAP" id="MF_01092">
    <property type="entry name" value="ZapD"/>
    <property type="match status" value="1"/>
</dbReference>
<dbReference type="InterPro" id="IPR009777">
    <property type="entry name" value="ZapD"/>
</dbReference>
<dbReference type="InterPro" id="IPR027462">
    <property type="entry name" value="ZapD_C"/>
</dbReference>
<dbReference type="InterPro" id="IPR036268">
    <property type="entry name" value="ZapD_sf"/>
</dbReference>
<dbReference type="NCBIfam" id="NF003653">
    <property type="entry name" value="PRK05287.1-1"/>
    <property type="match status" value="1"/>
</dbReference>
<dbReference type="NCBIfam" id="NF003655">
    <property type="entry name" value="PRK05287.1-3"/>
    <property type="match status" value="1"/>
</dbReference>
<dbReference type="PANTHER" id="PTHR39455">
    <property type="entry name" value="CELL DIVISION PROTEIN ZAPD"/>
    <property type="match status" value="1"/>
</dbReference>
<dbReference type="PANTHER" id="PTHR39455:SF1">
    <property type="entry name" value="CELL DIVISION PROTEIN ZAPD"/>
    <property type="match status" value="1"/>
</dbReference>
<dbReference type="Pfam" id="PF07072">
    <property type="entry name" value="ZapD"/>
    <property type="match status" value="1"/>
</dbReference>
<dbReference type="SUPFAM" id="SSF160950">
    <property type="entry name" value="YacF-like"/>
    <property type="match status" value="1"/>
</dbReference>
<name>ZAPD_CROS8</name>
<keyword id="KW-0131">Cell cycle</keyword>
<keyword id="KW-0132">Cell division</keyword>
<keyword id="KW-0963">Cytoplasm</keyword>
<keyword id="KW-1185">Reference proteome</keyword>
<keyword id="KW-0717">Septation</keyword>
<proteinExistence type="inferred from homology"/>
<gene>
    <name evidence="1" type="primary">zapD</name>
    <name type="ordered locus">ESA_03236</name>
</gene>